<protein>
    <recommendedName>
        <fullName>Putative universal stress protein SAB1569</fullName>
    </recommendedName>
</protein>
<reference key="1">
    <citation type="journal article" date="2007" name="PLoS ONE">
        <title>Molecular correlates of host specialization in Staphylococcus aureus.</title>
        <authorList>
            <person name="Herron-Olson L."/>
            <person name="Fitzgerald J.R."/>
            <person name="Musser J.M."/>
            <person name="Kapur V."/>
        </authorList>
    </citation>
    <scope>NUCLEOTIDE SEQUENCE [LARGE SCALE GENOMIC DNA]</scope>
    <source>
        <strain>bovine RF122 / ET3-1</strain>
    </source>
</reference>
<keyword id="KW-0963">Cytoplasm</keyword>
<dbReference type="EMBL" id="AJ938182">
    <property type="protein sequence ID" value="CAI81258.1"/>
    <property type="molecule type" value="Genomic_DNA"/>
</dbReference>
<dbReference type="RefSeq" id="WP_000634175.1">
    <property type="nucleotide sequence ID" value="NC_007622.1"/>
</dbReference>
<dbReference type="SMR" id="Q2YTD0"/>
<dbReference type="KEGG" id="sab:SAB1569"/>
<dbReference type="HOGENOM" id="CLU_049301_16_0_9"/>
<dbReference type="GO" id="GO:0005737">
    <property type="term" value="C:cytoplasm"/>
    <property type="evidence" value="ECO:0007669"/>
    <property type="project" value="UniProtKB-SubCell"/>
</dbReference>
<dbReference type="CDD" id="cd00293">
    <property type="entry name" value="USP-like"/>
    <property type="match status" value="1"/>
</dbReference>
<dbReference type="Gene3D" id="3.40.50.620">
    <property type="entry name" value="HUPs"/>
    <property type="match status" value="1"/>
</dbReference>
<dbReference type="InterPro" id="IPR014729">
    <property type="entry name" value="Rossmann-like_a/b/a_fold"/>
</dbReference>
<dbReference type="InterPro" id="IPR006015">
    <property type="entry name" value="Universal_stress_UspA"/>
</dbReference>
<dbReference type="InterPro" id="IPR006016">
    <property type="entry name" value="UspA"/>
</dbReference>
<dbReference type="PANTHER" id="PTHR46268">
    <property type="entry name" value="STRESS RESPONSE PROTEIN NHAX"/>
    <property type="match status" value="1"/>
</dbReference>
<dbReference type="PANTHER" id="PTHR46268:SF6">
    <property type="entry name" value="UNIVERSAL STRESS PROTEIN UP12"/>
    <property type="match status" value="1"/>
</dbReference>
<dbReference type="Pfam" id="PF00582">
    <property type="entry name" value="Usp"/>
    <property type="match status" value="1"/>
</dbReference>
<dbReference type="PIRSF" id="PIRSF006276">
    <property type="entry name" value="UspA"/>
    <property type="match status" value="1"/>
</dbReference>
<dbReference type="PRINTS" id="PR01438">
    <property type="entry name" value="UNVRSLSTRESS"/>
</dbReference>
<dbReference type="SUPFAM" id="SSF52402">
    <property type="entry name" value="Adenine nucleotide alpha hydrolases-like"/>
    <property type="match status" value="1"/>
</dbReference>
<comment type="subcellular location">
    <subcellularLocation>
        <location evidence="1">Cytoplasm</location>
    </subcellularLocation>
</comment>
<comment type="similarity">
    <text evidence="2">Belongs to the universal stress protein A family.</text>
</comment>
<accession>Q2YTD0</accession>
<proteinExistence type="inferred from homology"/>
<organism>
    <name type="scientific">Staphylococcus aureus (strain bovine RF122 / ET3-1)</name>
    <dbReference type="NCBI Taxonomy" id="273036"/>
    <lineage>
        <taxon>Bacteria</taxon>
        <taxon>Bacillati</taxon>
        <taxon>Bacillota</taxon>
        <taxon>Bacilli</taxon>
        <taxon>Bacillales</taxon>
        <taxon>Staphylococcaceae</taxon>
        <taxon>Staphylococcus</taxon>
    </lineage>
</organism>
<feature type="chain" id="PRO_0000288889" description="Putative universal stress protein SAB1569">
    <location>
        <begin position="1"/>
        <end position="166"/>
    </location>
</feature>
<gene>
    <name type="ordered locus">SAB1569</name>
</gene>
<evidence type="ECO:0000250" key="1"/>
<evidence type="ECO:0000305" key="2"/>
<sequence>MITYKNILIAVDGSHEAEWAFNRAVGVAKRNDAKLTIVNVIDSRTYSSYEVYDAQFTEKSKHFAEELLNGYKEVATNAGVKDVETRLEFGSPKSIIPKKLAHEINADLIMSGTSGLNAVERFIVGSVSESIVRHAPCDVLVVRTEELPADFQPQVATTQLREKYQN</sequence>
<name>Y1569_STAAB</name>